<dbReference type="EC" id="1.17.7.3" evidence="1"/>
<dbReference type="EMBL" id="AE008922">
    <property type="protein sequence ID" value="AAM41071.1"/>
    <property type="molecule type" value="Genomic_DNA"/>
</dbReference>
<dbReference type="RefSeq" id="NP_637147.1">
    <property type="nucleotide sequence ID" value="NC_003902.1"/>
</dbReference>
<dbReference type="RefSeq" id="WP_011036954.1">
    <property type="nucleotide sequence ID" value="NC_003902.1"/>
</dbReference>
<dbReference type="SMR" id="Q8P9R7"/>
<dbReference type="STRING" id="190485.XCC1781"/>
<dbReference type="EnsemblBacteria" id="AAM41071">
    <property type="protein sequence ID" value="AAM41071"/>
    <property type="gene ID" value="XCC1781"/>
</dbReference>
<dbReference type="GeneID" id="58013667"/>
<dbReference type="KEGG" id="xcc:XCC1781"/>
<dbReference type="PATRIC" id="fig|190485.4.peg.1900"/>
<dbReference type="eggNOG" id="COG0821">
    <property type="taxonomic scope" value="Bacteria"/>
</dbReference>
<dbReference type="HOGENOM" id="CLU_042258_1_0_6"/>
<dbReference type="OrthoDB" id="9803214at2"/>
<dbReference type="UniPathway" id="UPA00056">
    <property type="reaction ID" value="UER00096"/>
</dbReference>
<dbReference type="Proteomes" id="UP000001010">
    <property type="component" value="Chromosome"/>
</dbReference>
<dbReference type="GO" id="GO:0051539">
    <property type="term" value="F:4 iron, 4 sulfur cluster binding"/>
    <property type="evidence" value="ECO:0007669"/>
    <property type="project" value="UniProtKB-UniRule"/>
</dbReference>
<dbReference type="GO" id="GO:0046429">
    <property type="term" value="F:4-hydroxy-3-methylbut-2-en-1-yl diphosphate synthase activity (ferredoxin)"/>
    <property type="evidence" value="ECO:0000318"/>
    <property type="project" value="GO_Central"/>
</dbReference>
<dbReference type="GO" id="GO:0141197">
    <property type="term" value="F:4-hydroxy-3-methylbut-2-enyl-diphosphate synthase activity (flavodoxin)"/>
    <property type="evidence" value="ECO:0007669"/>
    <property type="project" value="UniProtKB-EC"/>
</dbReference>
<dbReference type="GO" id="GO:0005506">
    <property type="term" value="F:iron ion binding"/>
    <property type="evidence" value="ECO:0007669"/>
    <property type="project" value="InterPro"/>
</dbReference>
<dbReference type="GO" id="GO:0019288">
    <property type="term" value="P:isopentenyl diphosphate biosynthetic process, methylerythritol 4-phosphate pathway"/>
    <property type="evidence" value="ECO:0000318"/>
    <property type="project" value="GO_Central"/>
</dbReference>
<dbReference type="GO" id="GO:0016114">
    <property type="term" value="P:terpenoid biosynthetic process"/>
    <property type="evidence" value="ECO:0007669"/>
    <property type="project" value="InterPro"/>
</dbReference>
<dbReference type="FunFam" id="3.20.20.20:FF:000001">
    <property type="entry name" value="4-hydroxy-3-methylbut-2-en-1-yl diphosphate synthase (flavodoxin)"/>
    <property type="match status" value="1"/>
</dbReference>
<dbReference type="FunFam" id="3.30.413.10:FF:000012">
    <property type="entry name" value="4-hydroxy-3-methylbut-2-en-1-yl diphosphate synthase (flavodoxin)"/>
    <property type="match status" value="1"/>
</dbReference>
<dbReference type="Gene3D" id="3.20.20.20">
    <property type="entry name" value="Dihydropteroate synthase-like"/>
    <property type="match status" value="1"/>
</dbReference>
<dbReference type="Gene3D" id="3.30.413.10">
    <property type="entry name" value="Sulfite Reductase Hemoprotein, domain 1"/>
    <property type="match status" value="1"/>
</dbReference>
<dbReference type="HAMAP" id="MF_00159">
    <property type="entry name" value="IspG"/>
    <property type="match status" value="1"/>
</dbReference>
<dbReference type="InterPro" id="IPR011005">
    <property type="entry name" value="Dihydropteroate_synth-like_sf"/>
</dbReference>
<dbReference type="InterPro" id="IPR016425">
    <property type="entry name" value="IspG_bac"/>
</dbReference>
<dbReference type="InterPro" id="IPR004588">
    <property type="entry name" value="IspG_bac-typ"/>
</dbReference>
<dbReference type="InterPro" id="IPR045854">
    <property type="entry name" value="NO2/SO3_Rdtase_4Fe4S_sf"/>
</dbReference>
<dbReference type="NCBIfam" id="TIGR00612">
    <property type="entry name" value="ispG_gcpE"/>
    <property type="match status" value="1"/>
</dbReference>
<dbReference type="NCBIfam" id="NF001540">
    <property type="entry name" value="PRK00366.1"/>
    <property type="match status" value="1"/>
</dbReference>
<dbReference type="PANTHER" id="PTHR30454">
    <property type="entry name" value="4-HYDROXY-3-METHYLBUT-2-EN-1-YL DIPHOSPHATE SYNTHASE"/>
    <property type="match status" value="1"/>
</dbReference>
<dbReference type="PANTHER" id="PTHR30454:SF0">
    <property type="entry name" value="4-HYDROXY-3-METHYLBUT-2-EN-1-YL DIPHOSPHATE SYNTHASE (FERREDOXIN), CHLOROPLASTIC"/>
    <property type="match status" value="1"/>
</dbReference>
<dbReference type="Pfam" id="PF04551">
    <property type="entry name" value="GcpE"/>
    <property type="match status" value="1"/>
</dbReference>
<dbReference type="PIRSF" id="PIRSF004640">
    <property type="entry name" value="IspG"/>
    <property type="match status" value="1"/>
</dbReference>
<proteinExistence type="inferred from homology"/>
<keyword id="KW-0004">4Fe-4S</keyword>
<keyword id="KW-0408">Iron</keyword>
<keyword id="KW-0411">Iron-sulfur</keyword>
<keyword id="KW-0414">Isoprene biosynthesis</keyword>
<keyword id="KW-0479">Metal-binding</keyword>
<keyword id="KW-0560">Oxidoreductase</keyword>
<keyword id="KW-1185">Reference proteome</keyword>
<gene>
    <name evidence="1" type="primary">ispG</name>
    <name type="ordered locus">XCC1781</name>
</gene>
<organism>
    <name type="scientific">Xanthomonas campestris pv. campestris (strain ATCC 33913 / DSM 3586 / NCPPB 528 / LMG 568 / P 25)</name>
    <dbReference type="NCBI Taxonomy" id="190485"/>
    <lineage>
        <taxon>Bacteria</taxon>
        <taxon>Pseudomonadati</taxon>
        <taxon>Pseudomonadota</taxon>
        <taxon>Gammaproteobacteria</taxon>
        <taxon>Lysobacterales</taxon>
        <taxon>Lysobacteraceae</taxon>
        <taxon>Xanthomonas</taxon>
    </lineage>
</organism>
<feature type="chain" id="PRO_0000190661" description="4-hydroxy-3-methylbut-2-en-1-yl diphosphate synthase (flavodoxin)">
    <location>
        <begin position="1"/>
        <end position="421"/>
    </location>
</feature>
<feature type="binding site" evidence="1">
    <location>
        <position position="311"/>
    </location>
    <ligand>
        <name>[4Fe-4S] cluster</name>
        <dbReference type="ChEBI" id="CHEBI:49883"/>
    </ligand>
</feature>
<feature type="binding site" evidence="1">
    <location>
        <position position="314"/>
    </location>
    <ligand>
        <name>[4Fe-4S] cluster</name>
        <dbReference type="ChEBI" id="CHEBI:49883"/>
    </ligand>
</feature>
<feature type="binding site" evidence="1">
    <location>
        <position position="357"/>
    </location>
    <ligand>
        <name>[4Fe-4S] cluster</name>
        <dbReference type="ChEBI" id="CHEBI:49883"/>
    </ligand>
</feature>
<feature type="binding site" evidence="1">
    <location>
        <position position="364"/>
    </location>
    <ligand>
        <name>[4Fe-4S] cluster</name>
        <dbReference type="ChEBI" id="CHEBI:49883"/>
    </ligand>
</feature>
<accession>Q8P9R7</accession>
<comment type="function">
    <text evidence="1">Converts 2C-methyl-D-erythritol 2,4-cyclodiphosphate (ME-2,4cPP) into 1-hydroxy-2-methyl-2-(E)-butenyl 4-diphosphate.</text>
</comment>
<comment type="catalytic activity">
    <reaction evidence="1">
        <text>(2E)-4-hydroxy-3-methylbut-2-enyl diphosphate + oxidized [flavodoxin] + H2O + 2 H(+) = 2-C-methyl-D-erythritol 2,4-cyclic diphosphate + reduced [flavodoxin]</text>
        <dbReference type="Rhea" id="RHEA:43604"/>
        <dbReference type="Rhea" id="RHEA-COMP:10622"/>
        <dbReference type="Rhea" id="RHEA-COMP:10623"/>
        <dbReference type="ChEBI" id="CHEBI:15377"/>
        <dbReference type="ChEBI" id="CHEBI:15378"/>
        <dbReference type="ChEBI" id="CHEBI:57618"/>
        <dbReference type="ChEBI" id="CHEBI:58210"/>
        <dbReference type="ChEBI" id="CHEBI:58483"/>
        <dbReference type="ChEBI" id="CHEBI:128753"/>
        <dbReference type="EC" id="1.17.7.3"/>
    </reaction>
</comment>
<comment type="cofactor">
    <cofactor evidence="1">
        <name>[4Fe-4S] cluster</name>
        <dbReference type="ChEBI" id="CHEBI:49883"/>
    </cofactor>
    <text evidence="1">Binds 1 [4Fe-4S] cluster.</text>
</comment>
<comment type="pathway">
    <text evidence="1">Isoprenoid biosynthesis; isopentenyl diphosphate biosynthesis via DXP pathway; isopentenyl diphosphate from 1-deoxy-D-xylulose 5-phosphate: step 5/6.</text>
</comment>
<comment type="similarity">
    <text evidence="1">Belongs to the IspG family.</text>
</comment>
<sequence>MYDAVTRPSPPADASAWPRRITQAVKVGNVIVGGGHPVVVQSMTNTDTADIAGSVKQVAELWRAGSEMVRLTVNNAESAAAIPRIVEKLRMMGIEVPLIGDFHYNGHQLLTAEPACAEALAKYRINPGNVGFGKKKDLQFAQLIEFAIQYDKPVRIGANWGSLDQALAAQLMDENSKRETPWDAGRVLREALIRSAVDSAERAVELGLPRERIILSAKVSGVQELIAVYRDMAARCDFALHLGLTEAGIGSKGIVASAAALSVLLQEGIGDTIRISLTPEPGQSRTQEVIVAQELLQTTGQRAFTPLVTACPGCGRTTSEFFQELAGVVQNHVRAKMPEWKISNPGAENMTLAVMGCVVNGPGESRHANIGISLPGTGEAPSAPVFVDGEKTVTLRGENIAYEFIDLIDQYVERTYVRRAG</sequence>
<protein>
    <recommendedName>
        <fullName evidence="1">4-hydroxy-3-methylbut-2-en-1-yl diphosphate synthase (flavodoxin)</fullName>
        <ecNumber evidence="1">1.17.7.3</ecNumber>
    </recommendedName>
    <alternativeName>
        <fullName evidence="1">1-hydroxy-2-methyl-2-(E)-butenyl 4-diphosphate synthase</fullName>
    </alternativeName>
</protein>
<evidence type="ECO:0000255" key="1">
    <source>
        <dbReference type="HAMAP-Rule" id="MF_00159"/>
    </source>
</evidence>
<reference key="1">
    <citation type="journal article" date="2002" name="Nature">
        <title>Comparison of the genomes of two Xanthomonas pathogens with differing host specificities.</title>
        <authorList>
            <person name="da Silva A.C.R."/>
            <person name="Ferro J.A."/>
            <person name="Reinach F.C."/>
            <person name="Farah C.S."/>
            <person name="Furlan L.R."/>
            <person name="Quaggio R.B."/>
            <person name="Monteiro-Vitorello C.B."/>
            <person name="Van Sluys M.A."/>
            <person name="Almeida N.F. Jr."/>
            <person name="Alves L.M.C."/>
            <person name="do Amaral A.M."/>
            <person name="Bertolini M.C."/>
            <person name="Camargo L.E.A."/>
            <person name="Camarotte G."/>
            <person name="Cannavan F."/>
            <person name="Cardozo J."/>
            <person name="Chambergo F."/>
            <person name="Ciapina L.P."/>
            <person name="Cicarelli R.M.B."/>
            <person name="Coutinho L.L."/>
            <person name="Cursino-Santos J.R."/>
            <person name="El-Dorry H."/>
            <person name="Faria J.B."/>
            <person name="Ferreira A.J.S."/>
            <person name="Ferreira R.C.C."/>
            <person name="Ferro M.I.T."/>
            <person name="Formighieri E.F."/>
            <person name="Franco M.C."/>
            <person name="Greggio C.C."/>
            <person name="Gruber A."/>
            <person name="Katsuyama A.M."/>
            <person name="Kishi L.T."/>
            <person name="Leite R.P."/>
            <person name="Lemos E.G.M."/>
            <person name="Lemos M.V.F."/>
            <person name="Locali E.C."/>
            <person name="Machado M.A."/>
            <person name="Madeira A.M.B.N."/>
            <person name="Martinez-Rossi N.M."/>
            <person name="Martins E.C."/>
            <person name="Meidanis J."/>
            <person name="Menck C.F.M."/>
            <person name="Miyaki C.Y."/>
            <person name="Moon D.H."/>
            <person name="Moreira L.M."/>
            <person name="Novo M.T.M."/>
            <person name="Okura V.K."/>
            <person name="Oliveira M.C."/>
            <person name="Oliveira V.R."/>
            <person name="Pereira H.A."/>
            <person name="Rossi A."/>
            <person name="Sena J.A.D."/>
            <person name="Silva C."/>
            <person name="de Souza R.F."/>
            <person name="Spinola L.A.F."/>
            <person name="Takita M.A."/>
            <person name="Tamura R.E."/>
            <person name="Teixeira E.C."/>
            <person name="Tezza R.I.D."/>
            <person name="Trindade dos Santos M."/>
            <person name="Truffi D."/>
            <person name="Tsai S.M."/>
            <person name="White F.F."/>
            <person name="Setubal J.C."/>
            <person name="Kitajima J.P."/>
        </authorList>
    </citation>
    <scope>NUCLEOTIDE SEQUENCE [LARGE SCALE GENOMIC DNA]</scope>
    <source>
        <strain>ATCC 33913 / DSM 3586 / NCPPB 528 / LMG 568 / P 25</strain>
    </source>
</reference>
<name>ISPG_XANCP</name>